<name>BCK1_YEAST</name>
<comment type="function">
    <text>Serine/threonine protein kinase involved in a signal transduction pathway that plays a role in yeast cell morphogenesis and cell growth. This pathway seems to start by SMP3; then involve the kinase PKC1 that may act on this kinase. BCK1 probably phosphorylates MKK1 and MKK2 which themselves phosphorylate the MPK1 kinase.</text>
</comment>
<comment type="catalytic activity">
    <reaction>
        <text>L-seryl-[protein] + ATP = O-phospho-L-seryl-[protein] + ADP + H(+)</text>
        <dbReference type="Rhea" id="RHEA:17989"/>
        <dbReference type="Rhea" id="RHEA-COMP:9863"/>
        <dbReference type="Rhea" id="RHEA-COMP:11604"/>
        <dbReference type="ChEBI" id="CHEBI:15378"/>
        <dbReference type="ChEBI" id="CHEBI:29999"/>
        <dbReference type="ChEBI" id="CHEBI:30616"/>
        <dbReference type="ChEBI" id="CHEBI:83421"/>
        <dbReference type="ChEBI" id="CHEBI:456216"/>
        <dbReference type="EC" id="2.7.11.1"/>
    </reaction>
</comment>
<comment type="catalytic activity">
    <reaction>
        <text>L-threonyl-[protein] + ATP = O-phospho-L-threonyl-[protein] + ADP + H(+)</text>
        <dbReference type="Rhea" id="RHEA:46608"/>
        <dbReference type="Rhea" id="RHEA-COMP:11060"/>
        <dbReference type="Rhea" id="RHEA-COMP:11605"/>
        <dbReference type="ChEBI" id="CHEBI:15378"/>
        <dbReference type="ChEBI" id="CHEBI:30013"/>
        <dbReference type="ChEBI" id="CHEBI:30616"/>
        <dbReference type="ChEBI" id="CHEBI:61977"/>
        <dbReference type="ChEBI" id="CHEBI:456216"/>
        <dbReference type="EC" id="2.7.11.1"/>
    </reaction>
</comment>
<comment type="interaction">
    <interactant intactId="EBI-3470">
        <id>Q01389</id>
    </interactant>
    <interactant intactId="EBI-4192">
        <id>Q00684</id>
        <label>CDC14</label>
    </interactant>
    <organismsDiffer>false</organismsDiffer>
    <experiments>4</experiments>
</comment>
<comment type="interaction">
    <interactant intactId="EBI-3470">
        <id>Q01389</id>
    </interactant>
    <interactant intactId="EBI-11670">
        <id>P36006</id>
        <label>MYO3</label>
    </interactant>
    <organismsDiffer>false</organismsDiffer>
    <experiments>6</experiments>
</comment>
<comment type="interaction">
    <interactant intactId="EBI-3470">
        <id>Q01389</id>
    </interactant>
    <interactant intactId="EBI-11687">
        <id>Q04439</id>
        <label>MYO5</label>
    </interactant>
    <organismsDiffer>false</organismsDiffer>
    <experiments>6</experiments>
</comment>
<comment type="subcellular location">
    <subcellularLocation>
        <location evidence="7">Cytoplasm</location>
    </subcellularLocation>
</comment>
<comment type="miscellaneous">
    <text evidence="5">Present with 112 molecules/cell in log phase SD medium.</text>
</comment>
<comment type="similarity">
    <text evidence="7">Belongs to the protein kinase superfamily. STE Ser/Thr protein kinase family. MAP kinase kinase kinase subfamily.</text>
</comment>
<comment type="sequence caution" evidence="7">
    <conflict type="erroneous initiation">
        <sequence resource="EMBL-CDS" id="AAA21179"/>
    </conflict>
    <text>Truncated N-terminus.</text>
</comment>
<comment type="sequence caution" evidence="7">
    <conflict type="frameshift">
        <sequence resource="EMBL-CDS" id="AAA21179"/>
    </conflict>
</comment>
<gene>
    <name type="primary">BCK1</name>
    <name type="synonym">LAS3</name>
    <name type="synonym">SLK1</name>
    <name type="synonym">SSP31</name>
    <name type="ordered locus">YJL095W</name>
    <name type="ORF">J0906</name>
</gene>
<evidence type="ECO:0000255" key="1"/>
<evidence type="ECO:0000255" key="2">
    <source>
        <dbReference type="PROSITE-ProRule" id="PRU00159"/>
    </source>
</evidence>
<evidence type="ECO:0000255" key="3">
    <source>
        <dbReference type="PROSITE-ProRule" id="PRU10027"/>
    </source>
</evidence>
<evidence type="ECO:0000256" key="4">
    <source>
        <dbReference type="SAM" id="MobiDB-lite"/>
    </source>
</evidence>
<evidence type="ECO:0000269" key="5">
    <source>
    </source>
</evidence>
<evidence type="ECO:0000269" key="6">
    <source>
    </source>
</evidence>
<evidence type="ECO:0000305" key="7"/>
<evidence type="ECO:0007744" key="8">
    <source>
    </source>
</evidence>
<evidence type="ECO:0007744" key="9">
    <source>
    </source>
</evidence>
<evidence type="ECO:0007744" key="10">
    <source>
    </source>
</evidence>
<sequence length="1478" mass="164195">MPFLRKIAGTAHTHSRSDSNSSVKFGHQPTSSVASTKSSSKSPRATSRKSIYDDIRSQFPNLTPNSTSSQFYESTPVIEQSFNWTTDDHISAGTLENPTSFTNSSYKNDNGPSSLSDSRKSSGGNSVNSLSFDKLILSWDPTDPDEWTMHRVTSWFKFHDFPESWILFFKKHQLFGHRFIKLLAYDNFAVYEKYLPQTKTASYTRFQQLLKKTMTKNVTNSHIRQKSASKLKSSRSSSESIKSKLKNSKSQEDISNSRSTSESALSPTKSGPSKTDEKNFLHSTSTHQKTKSASSLYRRSFISLRGSSSSNASSAKSPSNIKLSIPARPHSIIESNSTLTKSASPPASPSYPSIFRRHHKSSSSESSLLNSLFGSGIGEEAPTKPNPQGHSLSSENLAKGKSKHYETNVSSPLKQSSLPTSDDKGNLWNKFKRKSQIGVPSPNTVAYVTSQETPSLKSNSSTATLTVQTADVNIPSPSSSPPPIPKTANRSLEVISTEDTPKISSTTASFKETYPDCINPDKTVPVPVNNQKYSVKNFLLDQKFYPLKKTGLNDSENKYILVTKDNVSFVPLNLKSVAKLSSFKESALTKLGINHKNVTFHMTDFDCDIGAAIPDDTLEFLKKSLFLNTSGKIYIKDQMKLQQKPKPAPLTSENNVPLKSVKSKSSMRSGTSSLIASTDDVSIVTSSSDITSFDEHASGSGRRYPQTPSYYYDRVSNTNPTEELNYWNIKEVLSHEENAPKMVFKTSPKLELNLPDKGSKLNIPTPITENESKSSFQVLRKDEGTEIDFNHRRESPYTKPELAPKREAPKPPANTSPQRTLSTSKQNKPIRLVRASTKISRSKRSKPLPPQLLSSPIEASSSSPDSLTSSYTPASTHVLIPQPYKGANDVMRRLKTDQDSTSTSPSLKMKQKVNRSNSTVSTSNSIFYSPSPLLKRGNSKRVVSSTSAADIFEENDITFADAPPMFDSDDSDDDSSSSDDIIWSKKKTAPETNNENKKDEKSDNSSTHSDEIFYDSQTQDKMERKMTFRPSPEVVYQNLEKFFPRANLDKPITEGIASPTSPKSLDSLLSPKNVASSRTEPSTPSRPVPPDSSYEFIQDGLNGKNKPLNQAKTPKRTKTIRTIAHEASLARKNSVKLKRQNTKMWGTRMVEVTENHMVSINKAKNSKGEYKEFAWMKGEMIGKGSFGAVYLCLNVTTGEMMAVKQVEVPKYSSQNEAILSTVEALRSEVSTLKDLDHLNIVQYLGFENKNNIYSLFLEYVAGGSVGSLIRMYGRFDEPLIKHLTTQVLKGLAYLHSKGILHRDMKADNLLLDQDGICKISDFGISRKSKDIYSNSDMTMRGTVFWMAPEMVDTKQGYSAKVDIWSLGCIVLEMFAGKRPWSNLEVVAAMFKIGKSKSAPPIPEDTLPLISQIGRNFLDACFEINPEKRPTANELLSHPFSEVNETFNFKSTRLAKFIKSNDKLNSSKLRITSQENKTE</sequence>
<keyword id="KW-0067">ATP-binding</keyword>
<keyword id="KW-0963">Cytoplasm</keyword>
<keyword id="KW-0418">Kinase</keyword>
<keyword id="KW-0547">Nucleotide-binding</keyword>
<keyword id="KW-0597">Phosphoprotein</keyword>
<keyword id="KW-1185">Reference proteome</keyword>
<keyword id="KW-0723">Serine/threonine-protein kinase</keyword>
<keyword id="KW-0808">Transferase</keyword>
<keyword id="KW-0829">Tyrosine-protein kinase</keyword>
<protein>
    <recommendedName>
        <fullName>Serine/threonine-protein kinase BCK1/SLK1/SSP31</fullName>
        <ecNumber>2.7.11.1</ecNumber>
    </recommendedName>
</protein>
<accession>Q01389</accession>
<accession>D6VW89</accession>
<accession>P32894</accession>
<proteinExistence type="evidence at protein level"/>
<reference key="1">
    <citation type="journal article" date="1992" name="Mol. Cell. Biol.">
        <title>A synthetic lethal screen identifies SLK1, a novel protein kinase homolog implicated in yeast cell morphogenesis and cell growth.</title>
        <authorList>
            <person name="Costigan C."/>
            <person name="Gehrung S."/>
            <person name="Snyder M."/>
        </authorList>
    </citation>
    <scope>NUCLEOTIDE SEQUENCE [GENOMIC DNA]</scope>
</reference>
<reference key="2">
    <citation type="journal article" date="1991" name="Gene">
        <title>A new protein kinase, SSP31, modulating the SMP3 gene-product involved in plasmid maintenance in Saccharomyces cerevisiae.</title>
        <authorList>
            <person name="Irie K."/>
            <person name="Araki H."/>
            <person name="Oshima Y."/>
        </authorList>
    </citation>
    <scope>NUCLEOTIDE SEQUENCE [GENOMIC DNA]</scope>
</reference>
<reference key="3">
    <citation type="journal article" date="1992" name="Mol. Cell. Biol.">
        <title>Dominant mutations in a gene encoding a putative protein kinase (BCK1) bypass the requirement for a Saccharomyces cerevisiae protein kinase C homolog.</title>
        <authorList>
            <person name="Lee K.S."/>
            <person name="Levin D.E."/>
        </authorList>
    </citation>
    <scope>NUCLEOTIDE SEQUENCE [GENOMIC DNA]</scope>
    <scope>MUTAGENESIS OF THR-1119; ILE-1120; GLY-1146 AND ALA-1174</scope>
    <source>
        <strain>ATCC 204278 / EG123 / SM1058</strain>
    </source>
</reference>
<reference key="4">
    <citation type="journal article" date="1994" name="Yeast">
        <title>Sequence and function analysis of a 9.74 kb fragment of Saccharomyces cerevisiae chromosome X including the BCK1 gene.</title>
        <authorList>
            <person name="Miosga T."/>
            <person name="Boles E."/>
            <person name="Schaaff-Gerstenschlaeger I."/>
            <person name="Schmitt S."/>
            <person name="Zimmermann F.K."/>
        </authorList>
    </citation>
    <scope>NUCLEOTIDE SEQUENCE [GENOMIC DNA]</scope>
    <source>
        <strain>ATCC 204508 / S288c</strain>
    </source>
</reference>
<reference key="5">
    <citation type="journal article" date="1996" name="EMBO J.">
        <title>Complete nucleotide sequence of Saccharomyces cerevisiae chromosome X.</title>
        <authorList>
            <person name="Galibert F."/>
            <person name="Alexandraki D."/>
            <person name="Baur A."/>
            <person name="Boles E."/>
            <person name="Chalwatzis N."/>
            <person name="Chuat J.-C."/>
            <person name="Coster F."/>
            <person name="Cziepluch C."/>
            <person name="de Haan M."/>
            <person name="Domdey H."/>
            <person name="Durand P."/>
            <person name="Entian K.-D."/>
            <person name="Gatius M."/>
            <person name="Goffeau A."/>
            <person name="Grivell L.A."/>
            <person name="Hennemann A."/>
            <person name="Herbert C.J."/>
            <person name="Heumann K."/>
            <person name="Hilger F."/>
            <person name="Hollenberg C.P."/>
            <person name="Huang M.-E."/>
            <person name="Jacq C."/>
            <person name="Jauniaux J.-C."/>
            <person name="Katsoulou C."/>
            <person name="Kirchrath L."/>
            <person name="Kleine K."/>
            <person name="Kordes E."/>
            <person name="Koetter P."/>
            <person name="Liebl S."/>
            <person name="Louis E.J."/>
            <person name="Manus V."/>
            <person name="Mewes H.-W."/>
            <person name="Miosga T."/>
            <person name="Obermaier B."/>
            <person name="Perea J."/>
            <person name="Pohl T.M."/>
            <person name="Portetelle D."/>
            <person name="Pujol A."/>
            <person name="Purnelle B."/>
            <person name="Ramezani Rad M."/>
            <person name="Rasmussen S.W."/>
            <person name="Rose M."/>
            <person name="Rossau R."/>
            <person name="Schaaff-Gerstenschlaeger I."/>
            <person name="Smits P.H.M."/>
            <person name="Scarcez T."/>
            <person name="Soriano N."/>
            <person name="To Van D."/>
            <person name="Tzermia M."/>
            <person name="Van Broekhoven A."/>
            <person name="Vandenbol M."/>
            <person name="Wedler H."/>
            <person name="von Wettstein D."/>
            <person name="Wambutt R."/>
            <person name="Zagulski M."/>
            <person name="Zollner A."/>
            <person name="Karpfinger-Hartl L."/>
        </authorList>
    </citation>
    <scope>NUCLEOTIDE SEQUENCE [LARGE SCALE GENOMIC DNA]</scope>
    <source>
        <strain>ATCC 204508 / S288c</strain>
    </source>
</reference>
<reference key="6">
    <citation type="journal article" date="2014" name="G3 (Bethesda)">
        <title>The reference genome sequence of Saccharomyces cerevisiae: Then and now.</title>
        <authorList>
            <person name="Engel S.R."/>
            <person name="Dietrich F.S."/>
            <person name="Fisk D.G."/>
            <person name="Binkley G."/>
            <person name="Balakrishnan R."/>
            <person name="Costanzo M.C."/>
            <person name="Dwight S.S."/>
            <person name="Hitz B.C."/>
            <person name="Karra K."/>
            <person name="Nash R.S."/>
            <person name="Weng S."/>
            <person name="Wong E.D."/>
            <person name="Lloyd P."/>
            <person name="Skrzypek M.S."/>
            <person name="Miyasato S.R."/>
            <person name="Simison M."/>
            <person name="Cherry J.M."/>
        </authorList>
    </citation>
    <scope>GENOME REANNOTATION</scope>
    <source>
        <strain>ATCC 204508 / S288c</strain>
    </source>
</reference>
<reference key="7">
    <citation type="submission" date="1992-03" db="EMBL/GenBank/DDBJ databases">
        <authorList>
            <person name="Cusick M.E."/>
        </authorList>
    </citation>
    <scope>NUCLEOTIDE SEQUENCE [GENOMIC DNA] OF 459-1173</scope>
</reference>
<reference key="8">
    <citation type="journal article" date="2003" name="Nature">
        <title>Global analysis of protein expression in yeast.</title>
        <authorList>
            <person name="Ghaemmaghami S."/>
            <person name="Huh W.-K."/>
            <person name="Bower K."/>
            <person name="Howson R.W."/>
            <person name="Belle A."/>
            <person name="Dephoure N."/>
            <person name="O'Shea E.K."/>
            <person name="Weissman J.S."/>
        </authorList>
    </citation>
    <scope>LEVEL OF PROTEIN EXPRESSION [LARGE SCALE ANALYSIS]</scope>
</reference>
<reference key="9">
    <citation type="journal article" date="2007" name="J. Proteome Res.">
        <title>Large-scale phosphorylation analysis of alpha-factor-arrested Saccharomyces cerevisiae.</title>
        <authorList>
            <person name="Li X."/>
            <person name="Gerber S.A."/>
            <person name="Rudner A.D."/>
            <person name="Beausoleil S.A."/>
            <person name="Haas W."/>
            <person name="Villen J."/>
            <person name="Elias J.E."/>
            <person name="Gygi S.P."/>
        </authorList>
    </citation>
    <scope>PHOSPHORYLATION [LARGE SCALE ANALYSIS] AT SER-747 AND SER-1058</scope>
    <scope>IDENTIFICATION BY MASS SPECTROMETRY [LARGE SCALE ANALYSIS]</scope>
    <source>
        <strain>ADR376</strain>
    </source>
</reference>
<reference key="10">
    <citation type="journal article" date="2007" name="Proc. Natl. Acad. Sci. U.S.A.">
        <title>Analysis of phosphorylation sites on proteins from Saccharomyces cerevisiae by electron transfer dissociation (ETD) mass spectrometry.</title>
        <authorList>
            <person name="Chi A."/>
            <person name="Huttenhower C."/>
            <person name="Geer L.Y."/>
            <person name="Coon J.J."/>
            <person name="Syka J.E.P."/>
            <person name="Bai D.L."/>
            <person name="Shabanowitz J."/>
            <person name="Burke D.J."/>
            <person name="Troyanskaya O.G."/>
            <person name="Hunt D.F."/>
        </authorList>
    </citation>
    <scope>IDENTIFICATION BY MASS SPECTROMETRY [LARGE SCALE ANALYSIS]</scope>
</reference>
<reference key="11">
    <citation type="journal article" date="2008" name="Mol. Cell. Proteomics">
        <title>A multidimensional chromatography technology for in-depth phosphoproteome analysis.</title>
        <authorList>
            <person name="Albuquerque C.P."/>
            <person name="Smolka M.B."/>
            <person name="Payne S.H."/>
            <person name="Bafna V."/>
            <person name="Eng J."/>
            <person name="Zhou H."/>
        </authorList>
    </citation>
    <scope>PHOSPHORYLATION [LARGE SCALE ANALYSIS] AT SER-491</scope>
    <scope>IDENTIFICATION BY MASS SPECTROMETRY [LARGE SCALE ANALYSIS]</scope>
</reference>
<reference key="12">
    <citation type="journal article" date="2009" name="Science">
        <title>Global analysis of Cdk1 substrate phosphorylation sites provides insights into evolution.</title>
        <authorList>
            <person name="Holt L.J."/>
            <person name="Tuch B.B."/>
            <person name="Villen J."/>
            <person name="Johnson A.D."/>
            <person name="Gygi S.P."/>
            <person name="Morgan D.O."/>
        </authorList>
    </citation>
    <scope>PHOSPHORYLATION [LARGE SCALE ANALYSIS] AT THR-407; SER-411; SER-491; SER-816; SER-1058 AND SER-1061</scope>
    <scope>IDENTIFICATION BY MASS SPECTROMETRY [LARGE SCALE ANALYSIS]</scope>
</reference>
<feature type="chain" id="PRO_0000085662" description="Serine/threonine-protein kinase BCK1/SLK1/SSP31">
    <location>
        <begin position="1"/>
        <end position="1478"/>
    </location>
</feature>
<feature type="domain" description="Protein kinase" evidence="2">
    <location>
        <begin position="1175"/>
        <end position="1440"/>
    </location>
</feature>
<feature type="region of interest" description="Disordered" evidence="4">
    <location>
        <begin position="1"/>
        <end position="70"/>
    </location>
</feature>
<feature type="region of interest" description="Disordered" evidence="4">
    <location>
        <begin position="99"/>
        <end position="126"/>
    </location>
</feature>
<feature type="region of interest" description="Disordered" evidence="4">
    <location>
        <begin position="217"/>
        <end position="359"/>
    </location>
</feature>
<feature type="region of interest" description="Disordered" evidence="4">
    <location>
        <begin position="373"/>
        <end position="427"/>
    </location>
</feature>
<feature type="region of interest" description="Disordered" evidence="4">
    <location>
        <begin position="644"/>
        <end position="671"/>
    </location>
</feature>
<feature type="region of interest" description="Disordered" evidence="4">
    <location>
        <begin position="752"/>
        <end position="877"/>
    </location>
</feature>
<feature type="region of interest" description="Disordered" evidence="4">
    <location>
        <begin position="895"/>
        <end position="939"/>
    </location>
</feature>
<feature type="region of interest" description="Disordered" evidence="4">
    <location>
        <begin position="960"/>
        <end position="1021"/>
    </location>
</feature>
<feature type="region of interest" description="Disordered" evidence="4">
    <location>
        <begin position="1053"/>
        <end position="1116"/>
    </location>
</feature>
<feature type="compositionally biased region" description="Low complexity" evidence="4">
    <location>
        <begin position="29"/>
        <end position="49"/>
    </location>
</feature>
<feature type="compositionally biased region" description="Polar residues" evidence="4">
    <location>
        <begin position="58"/>
        <end position="70"/>
    </location>
</feature>
<feature type="compositionally biased region" description="Polar residues" evidence="4">
    <location>
        <begin position="99"/>
        <end position="110"/>
    </location>
</feature>
<feature type="compositionally biased region" description="Low complexity" evidence="4">
    <location>
        <begin position="111"/>
        <end position="126"/>
    </location>
</feature>
<feature type="compositionally biased region" description="Basic residues" evidence="4">
    <location>
        <begin position="223"/>
        <end position="233"/>
    </location>
</feature>
<feature type="compositionally biased region" description="Polar residues" evidence="4">
    <location>
        <begin position="253"/>
        <end position="273"/>
    </location>
</feature>
<feature type="compositionally biased region" description="Polar residues" evidence="4">
    <location>
        <begin position="281"/>
        <end position="297"/>
    </location>
</feature>
<feature type="compositionally biased region" description="Low complexity" evidence="4">
    <location>
        <begin position="298"/>
        <end position="320"/>
    </location>
</feature>
<feature type="compositionally biased region" description="Low complexity" evidence="4">
    <location>
        <begin position="342"/>
        <end position="353"/>
    </location>
</feature>
<feature type="compositionally biased region" description="Polar residues" evidence="4">
    <location>
        <begin position="386"/>
        <end position="396"/>
    </location>
</feature>
<feature type="compositionally biased region" description="Polar residues" evidence="4">
    <location>
        <begin position="407"/>
        <end position="420"/>
    </location>
</feature>
<feature type="compositionally biased region" description="Low complexity" evidence="4">
    <location>
        <begin position="659"/>
        <end position="671"/>
    </location>
</feature>
<feature type="compositionally biased region" description="Polar residues" evidence="4">
    <location>
        <begin position="765"/>
        <end position="777"/>
    </location>
</feature>
<feature type="compositionally biased region" description="Basic and acidic residues" evidence="4">
    <location>
        <begin position="779"/>
        <end position="809"/>
    </location>
</feature>
<feature type="compositionally biased region" description="Polar residues" evidence="4">
    <location>
        <begin position="813"/>
        <end position="827"/>
    </location>
</feature>
<feature type="compositionally biased region" description="Low complexity" evidence="4">
    <location>
        <begin position="851"/>
        <end position="870"/>
    </location>
</feature>
<feature type="compositionally biased region" description="Low complexity" evidence="4">
    <location>
        <begin position="914"/>
        <end position="925"/>
    </location>
</feature>
<feature type="compositionally biased region" description="Acidic residues" evidence="4">
    <location>
        <begin position="967"/>
        <end position="977"/>
    </location>
</feature>
<feature type="compositionally biased region" description="Basic and acidic residues" evidence="4">
    <location>
        <begin position="994"/>
        <end position="1011"/>
    </location>
</feature>
<feature type="compositionally biased region" description="Low complexity" evidence="4">
    <location>
        <begin position="1058"/>
        <end position="1083"/>
    </location>
</feature>
<feature type="active site" description="Proton acceptor" evidence="2 3">
    <location>
        <position position="1303"/>
    </location>
</feature>
<feature type="binding site" evidence="2">
    <location>
        <begin position="1181"/>
        <end position="1189"/>
    </location>
    <ligand>
        <name>ATP</name>
        <dbReference type="ChEBI" id="CHEBI:30616"/>
    </ligand>
</feature>
<feature type="binding site" evidence="2">
    <location>
        <position position="1204"/>
    </location>
    <ligand>
        <name>ATP</name>
        <dbReference type="ChEBI" id="CHEBI:30616"/>
    </ligand>
</feature>
<feature type="modified residue" description="Phosphothreonine" evidence="10">
    <location>
        <position position="407"/>
    </location>
</feature>
<feature type="modified residue" description="Phosphoserine" evidence="10">
    <location>
        <position position="411"/>
    </location>
</feature>
<feature type="modified residue" description="Phosphoserine" evidence="9 10">
    <location>
        <position position="491"/>
    </location>
</feature>
<feature type="modified residue" description="Phosphoserine" evidence="8">
    <location>
        <position position="747"/>
    </location>
</feature>
<feature type="modified residue" description="Phosphoserine" evidence="10">
    <location>
        <position position="816"/>
    </location>
</feature>
<feature type="modified residue" description="Phosphoserine" evidence="8 10">
    <location>
        <position position="1058"/>
    </location>
</feature>
<feature type="modified residue" description="Phosphoserine" evidence="10">
    <location>
        <position position="1061"/>
    </location>
</feature>
<feature type="modified residue" description="Phosphoserine; by PKC" evidence="1">
    <location>
        <position position="1134"/>
    </location>
</feature>
<feature type="mutagenesis site" description="In BCK1-19; Dominant active." evidence="6">
    <original>T</original>
    <variation>P</variation>
    <location>
        <position position="1119"/>
    </location>
</feature>
<feature type="mutagenesis site" description="In BCK1-11; Dominant active." evidence="6">
    <original>I</original>
    <variation>K</variation>
    <location>
        <position position="1120"/>
    </location>
</feature>
<feature type="mutagenesis site" description="In BCK1-16; Dominant active." evidence="6">
    <original>I</original>
    <variation>T</variation>
    <location>
        <position position="1120"/>
    </location>
</feature>
<feature type="mutagenesis site" description="In BCK1-10; Dominant active." evidence="6">
    <original>G</original>
    <variation>V</variation>
    <location>
        <position position="1146"/>
    </location>
</feature>
<feature type="mutagenesis site" description="In BCK1-20; Dominant active." evidence="6">
    <original>A</original>
    <variation>P</variation>
    <location>
        <position position="1174"/>
    </location>
</feature>
<feature type="sequence conflict" description="In Ref. 3; CAA42788." evidence="7" ref="3">
    <original>F</original>
    <variation>I</variation>
    <location>
        <position position="59"/>
    </location>
</feature>
<feature type="sequence conflict" description="In Ref. 2; BAA01226." evidence="7" ref="2">
    <original>E</original>
    <variation>V</variation>
    <location>
        <position position="79"/>
    </location>
</feature>
<feature type="sequence conflict" description="In Ref. 3; CAA42788." evidence="7" ref="3">
    <original>A</original>
    <variation>P</variation>
    <location>
        <position position="264"/>
    </location>
</feature>
<feature type="sequence conflict" description="In Ref. 3; CAA42788." evidence="7" ref="3">
    <original>N</original>
    <variation>I</variation>
    <location>
        <position position="279"/>
    </location>
</feature>
<feature type="sequence conflict" description="In Ref. 3; CAA42788." evidence="7" ref="3">
    <original>RYPQTPSYYYDR</original>
    <variation>STPKPRVITMTE</variation>
    <location>
        <begin position="703"/>
        <end position="714"/>
    </location>
</feature>
<feature type="sequence conflict" description="In Ref. 3; CAA42788." evidence="7" ref="3">
    <original>S</original>
    <variation>A</variation>
    <location>
        <position position="795"/>
    </location>
</feature>
<feature type="sequence conflict" description="In Ref. 3; CAA42788." evidence="7" ref="3">
    <original>L</original>
    <variation>V</variation>
    <location>
        <position position="802"/>
    </location>
</feature>
<feature type="sequence conflict" description="In Ref. 3; CAA42788." evidence="7" ref="3">
    <original>A</original>
    <variation>S</variation>
    <location>
        <position position="808"/>
    </location>
</feature>
<feature type="sequence conflict" description="In Ref. 3; CAA42788." evidence="7" ref="3">
    <original>T</original>
    <variation>N</variation>
    <location>
        <position position="903"/>
    </location>
</feature>
<feature type="sequence conflict" description="In Ref. 3; CAA42788." evidence="7" ref="3">
    <original>T</original>
    <variation>N</variation>
    <location>
        <position position="919"/>
    </location>
</feature>
<feature type="sequence conflict" description="In Ref. 7; AAA21179." evidence="7" ref="7">
    <original>A</original>
    <variation>R</variation>
    <location>
        <position position="960"/>
    </location>
</feature>
<feature type="sequence conflict" description="In Ref. 7; AAA21179." evidence="7" ref="7">
    <original>A</original>
    <variation>R</variation>
    <location>
        <position position="962"/>
    </location>
</feature>
<organism>
    <name type="scientific">Saccharomyces cerevisiae (strain ATCC 204508 / S288c)</name>
    <name type="common">Baker's yeast</name>
    <dbReference type="NCBI Taxonomy" id="559292"/>
    <lineage>
        <taxon>Eukaryota</taxon>
        <taxon>Fungi</taxon>
        <taxon>Dikarya</taxon>
        <taxon>Ascomycota</taxon>
        <taxon>Saccharomycotina</taxon>
        <taxon>Saccharomycetes</taxon>
        <taxon>Saccharomycetales</taxon>
        <taxon>Saccharomycetaceae</taxon>
        <taxon>Saccharomyces</taxon>
    </lineage>
</organism>
<dbReference type="EC" id="2.7.11.1"/>
<dbReference type="EMBL" id="M84389">
    <property type="status" value="NOT_ANNOTATED_CDS"/>
    <property type="molecule type" value="Genomic_DNA"/>
</dbReference>
<dbReference type="EMBL" id="D10389">
    <property type="protein sequence ID" value="BAA01226.1"/>
    <property type="molecule type" value="Genomic_DNA"/>
</dbReference>
<dbReference type="EMBL" id="X60227">
    <property type="protein sequence ID" value="CAA42788.1"/>
    <property type="molecule type" value="Genomic_DNA"/>
</dbReference>
<dbReference type="EMBL" id="X77923">
    <property type="protein sequence ID" value="CAA54896.1"/>
    <property type="molecule type" value="Genomic_DNA"/>
</dbReference>
<dbReference type="EMBL" id="Z49370">
    <property type="protein sequence ID" value="CAA89389.1"/>
    <property type="molecule type" value="Genomic_DNA"/>
</dbReference>
<dbReference type="EMBL" id="Z49369">
    <property type="protein sequence ID" value="CAA89388.1"/>
    <property type="molecule type" value="Genomic_DNA"/>
</dbReference>
<dbReference type="EMBL" id="M88604">
    <property type="protein sequence ID" value="AAA21179.1"/>
    <property type="status" value="ALT_SEQ"/>
    <property type="molecule type" value="Genomic_DNA"/>
</dbReference>
<dbReference type="EMBL" id="BK006943">
    <property type="protein sequence ID" value="DAA08705.1"/>
    <property type="molecule type" value="Genomic_DNA"/>
</dbReference>
<dbReference type="PIR" id="S20117">
    <property type="entry name" value="S20117"/>
</dbReference>
<dbReference type="RefSeq" id="NP_012440.1">
    <property type="nucleotide sequence ID" value="NM_001181528.1"/>
</dbReference>
<dbReference type="SMR" id="Q01389"/>
<dbReference type="BioGRID" id="33662">
    <property type="interactions" value="838"/>
</dbReference>
<dbReference type="DIP" id="DIP-2223N"/>
<dbReference type="FunCoup" id="Q01389">
    <property type="interactions" value="622"/>
</dbReference>
<dbReference type="IntAct" id="Q01389">
    <property type="interactions" value="56"/>
</dbReference>
<dbReference type="MINT" id="Q01389"/>
<dbReference type="STRING" id="4932.YJL095W"/>
<dbReference type="CarbonylDB" id="Q01389"/>
<dbReference type="GlyGen" id="Q01389">
    <property type="glycosylation" value="7 sites, 1 O-linked glycan (6 sites)"/>
</dbReference>
<dbReference type="iPTMnet" id="Q01389"/>
<dbReference type="PaxDb" id="4932-YJL095W"/>
<dbReference type="PeptideAtlas" id="Q01389"/>
<dbReference type="EnsemblFungi" id="YJL095W_mRNA">
    <property type="protein sequence ID" value="YJL095W"/>
    <property type="gene ID" value="YJL095W"/>
</dbReference>
<dbReference type="GeneID" id="853350"/>
<dbReference type="KEGG" id="sce:YJL095W"/>
<dbReference type="AGR" id="SGD:S000003631"/>
<dbReference type="SGD" id="S000003631">
    <property type="gene designation" value="BCK1"/>
</dbReference>
<dbReference type="VEuPathDB" id="FungiDB:YJL095W"/>
<dbReference type="eggNOG" id="KOG0198">
    <property type="taxonomic scope" value="Eukaryota"/>
</dbReference>
<dbReference type="GeneTree" id="ENSGT00980000202011"/>
<dbReference type="HOGENOM" id="CLU_002516_0_0_1"/>
<dbReference type="InParanoid" id="Q01389"/>
<dbReference type="OMA" id="PWSNFEV"/>
<dbReference type="OrthoDB" id="266718at2759"/>
<dbReference type="BioCyc" id="YEAST:G3O-31550-MONOMER"/>
<dbReference type="Reactome" id="R-SCE-389357">
    <property type="pathway name" value="CD28 dependent PI3K/Akt signaling"/>
</dbReference>
<dbReference type="Reactome" id="R-SCE-5607761">
    <property type="pathway name" value="Dectin-1 mediated noncanonical NF-kB signaling"/>
</dbReference>
<dbReference type="Reactome" id="R-SCE-5668541">
    <property type="pathway name" value="TNFR2 non-canonical NF-kB pathway"/>
</dbReference>
<dbReference type="Reactome" id="R-SCE-5676590">
    <property type="pathway name" value="NIK--&gt;noncanonical NF-kB signaling"/>
</dbReference>
<dbReference type="BioGRID-ORCS" id="853350">
    <property type="hits" value="2 hits in 13 CRISPR screens"/>
</dbReference>
<dbReference type="PRO" id="PR:Q01389"/>
<dbReference type="Proteomes" id="UP000002311">
    <property type="component" value="Chromosome X"/>
</dbReference>
<dbReference type="RNAct" id="Q01389">
    <property type="molecule type" value="protein"/>
</dbReference>
<dbReference type="GO" id="GO:0005935">
    <property type="term" value="C:cellular bud neck"/>
    <property type="evidence" value="ECO:0007005"/>
    <property type="project" value="SGD"/>
</dbReference>
<dbReference type="GO" id="GO:0005737">
    <property type="term" value="C:cytoplasm"/>
    <property type="evidence" value="ECO:0007005"/>
    <property type="project" value="SGD"/>
</dbReference>
<dbReference type="GO" id="GO:0043332">
    <property type="term" value="C:mating projection tip"/>
    <property type="evidence" value="ECO:0007005"/>
    <property type="project" value="SGD"/>
</dbReference>
<dbReference type="GO" id="GO:0005524">
    <property type="term" value="F:ATP binding"/>
    <property type="evidence" value="ECO:0007669"/>
    <property type="project" value="UniProtKB-KW"/>
</dbReference>
<dbReference type="GO" id="GO:0004709">
    <property type="term" value="F:MAP kinase kinase kinase activity"/>
    <property type="evidence" value="ECO:0000315"/>
    <property type="project" value="SGD"/>
</dbReference>
<dbReference type="GO" id="GO:0004672">
    <property type="term" value="F:protein kinase activity"/>
    <property type="evidence" value="ECO:0007005"/>
    <property type="project" value="SGD"/>
</dbReference>
<dbReference type="GO" id="GO:0106310">
    <property type="term" value="F:protein serine kinase activity"/>
    <property type="evidence" value="ECO:0007669"/>
    <property type="project" value="RHEA"/>
</dbReference>
<dbReference type="GO" id="GO:0004713">
    <property type="term" value="F:protein tyrosine kinase activity"/>
    <property type="evidence" value="ECO:0007669"/>
    <property type="project" value="UniProtKB-KW"/>
</dbReference>
<dbReference type="GO" id="GO:0000196">
    <property type="term" value="P:cell integrity MAPK cascade"/>
    <property type="evidence" value="ECO:0000316"/>
    <property type="project" value="SGD"/>
</dbReference>
<dbReference type="GO" id="GO:0030968">
    <property type="term" value="P:endoplasmic reticulum unfolded protein response"/>
    <property type="evidence" value="ECO:0000315"/>
    <property type="project" value="SGD"/>
</dbReference>
<dbReference type="GO" id="GO:0030010">
    <property type="term" value="P:establishment of cell polarity"/>
    <property type="evidence" value="ECO:0000315"/>
    <property type="project" value="SGD"/>
</dbReference>
<dbReference type="GO" id="GO:0035556">
    <property type="term" value="P:intracellular signal transduction"/>
    <property type="evidence" value="ECO:0000315"/>
    <property type="project" value="SGD"/>
</dbReference>
<dbReference type="GO" id="GO:0000165">
    <property type="term" value="P:MAPK cascade"/>
    <property type="evidence" value="ECO:0000318"/>
    <property type="project" value="GO_Central"/>
</dbReference>
<dbReference type="GO" id="GO:0000425">
    <property type="term" value="P:pexophagy"/>
    <property type="evidence" value="ECO:0000315"/>
    <property type="project" value="SGD"/>
</dbReference>
<dbReference type="GO" id="GO:0060237">
    <property type="term" value="P:regulation of fungal-type cell wall organization"/>
    <property type="evidence" value="ECO:0000315"/>
    <property type="project" value="SGD"/>
</dbReference>
<dbReference type="GO" id="GO:0010447">
    <property type="term" value="P:response to acidic pH"/>
    <property type="evidence" value="ECO:0000315"/>
    <property type="project" value="SGD"/>
</dbReference>
<dbReference type="CDD" id="cd06629">
    <property type="entry name" value="STKc_Bck1_like"/>
    <property type="match status" value="1"/>
</dbReference>
<dbReference type="FunFam" id="1.10.510.10:FF:000182">
    <property type="entry name" value="MAP kinase kinase kinase mkh1"/>
    <property type="match status" value="1"/>
</dbReference>
<dbReference type="FunFam" id="3.30.200.20:FF:000387">
    <property type="entry name" value="Serine/threonine-protein kinase STE11"/>
    <property type="match status" value="1"/>
</dbReference>
<dbReference type="Gene3D" id="1.10.510.10">
    <property type="entry name" value="Transferase(Phosphotransferase) domain 1"/>
    <property type="match status" value="1"/>
</dbReference>
<dbReference type="InterPro" id="IPR011009">
    <property type="entry name" value="Kinase-like_dom_sf"/>
</dbReference>
<dbReference type="InterPro" id="IPR000719">
    <property type="entry name" value="Prot_kinase_dom"/>
</dbReference>
<dbReference type="InterPro" id="IPR017441">
    <property type="entry name" value="Protein_kinase_ATP_BS"/>
</dbReference>
<dbReference type="InterPro" id="IPR008271">
    <property type="entry name" value="Ser/Thr_kinase_AS"/>
</dbReference>
<dbReference type="PANTHER" id="PTHR11584:SF369">
    <property type="entry name" value="MITOGEN-ACTIVATED PROTEIN KINASE KINASE KINASE 19-RELATED"/>
    <property type="match status" value="1"/>
</dbReference>
<dbReference type="PANTHER" id="PTHR11584">
    <property type="entry name" value="SERINE/THREONINE PROTEIN KINASE"/>
    <property type="match status" value="1"/>
</dbReference>
<dbReference type="Pfam" id="PF00069">
    <property type="entry name" value="Pkinase"/>
    <property type="match status" value="1"/>
</dbReference>
<dbReference type="SMART" id="SM00220">
    <property type="entry name" value="S_TKc"/>
    <property type="match status" value="1"/>
</dbReference>
<dbReference type="SUPFAM" id="SSF56112">
    <property type="entry name" value="Protein kinase-like (PK-like)"/>
    <property type="match status" value="1"/>
</dbReference>
<dbReference type="PROSITE" id="PS00107">
    <property type="entry name" value="PROTEIN_KINASE_ATP"/>
    <property type="match status" value="1"/>
</dbReference>
<dbReference type="PROSITE" id="PS50011">
    <property type="entry name" value="PROTEIN_KINASE_DOM"/>
    <property type="match status" value="1"/>
</dbReference>
<dbReference type="PROSITE" id="PS00108">
    <property type="entry name" value="PROTEIN_KINASE_ST"/>
    <property type="match status" value="1"/>
</dbReference>